<name>Y2543_GEOKA</name>
<dbReference type="EC" id="2.1.1.-" evidence="1"/>
<dbReference type="EMBL" id="BA000043">
    <property type="protein sequence ID" value="BAD76828.1"/>
    <property type="molecule type" value="Genomic_DNA"/>
</dbReference>
<dbReference type="RefSeq" id="WP_011232021.1">
    <property type="nucleotide sequence ID" value="NC_006510.1"/>
</dbReference>
<dbReference type="SMR" id="Q5KWV8"/>
<dbReference type="STRING" id="235909.GK2543"/>
<dbReference type="KEGG" id="gka:GK2543"/>
<dbReference type="eggNOG" id="COG2226">
    <property type="taxonomic scope" value="Bacteria"/>
</dbReference>
<dbReference type="HOGENOM" id="CLU_111961_0_0_9"/>
<dbReference type="Proteomes" id="UP000001172">
    <property type="component" value="Chromosome"/>
</dbReference>
<dbReference type="GO" id="GO:0008757">
    <property type="term" value="F:S-adenosylmethionine-dependent methyltransferase activity"/>
    <property type="evidence" value="ECO:0007669"/>
    <property type="project" value="UniProtKB-UniRule"/>
</dbReference>
<dbReference type="GO" id="GO:0032259">
    <property type="term" value="P:methylation"/>
    <property type="evidence" value="ECO:0007669"/>
    <property type="project" value="UniProtKB-KW"/>
</dbReference>
<dbReference type="CDD" id="cd02440">
    <property type="entry name" value="AdoMet_MTases"/>
    <property type="match status" value="1"/>
</dbReference>
<dbReference type="Gene3D" id="3.40.50.150">
    <property type="entry name" value="Vaccinia Virus protein VP39"/>
    <property type="match status" value="1"/>
</dbReference>
<dbReference type="HAMAP" id="MF_02100">
    <property type="entry name" value="Methyltr_YrrT"/>
    <property type="match status" value="1"/>
</dbReference>
<dbReference type="InterPro" id="IPR041698">
    <property type="entry name" value="Methyltransf_25"/>
</dbReference>
<dbReference type="InterPro" id="IPR029063">
    <property type="entry name" value="SAM-dependent_MTases_sf"/>
</dbReference>
<dbReference type="InterPro" id="IPR023553">
    <property type="entry name" value="Uncharacterised_MeTfrase_YrrT"/>
</dbReference>
<dbReference type="PANTHER" id="PTHR43861">
    <property type="entry name" value="TRANS-ACONITATE 2-METHYLTRANSFERASE-RELATED"/>
    <property type="match status" value="1"/>
</dbReference>
<dbReference type="Pfam" id="PF13649">
    <property type="entry name" value="Methyltransf_25"/>
    <property type="match status" value="1"/>
</dbReference>
<dbReference type="SUPFAM" id="SSF53335">
    <property type="entry name" value="S-adenosyl-L-methionine-dependent methyltransferases"/>
    <property type="match status" value="1"/>
</dbReference>
<gene>
    <name type="ordered locus">GK2543</name>
</gene>
<feature type="chain" id="PRO_0000373853" description="Uncharacterized methyltransferase GK2543">
    <location>
        <begin position="1"/>
        <end position="215"/>
    </location>
</feature>
<feature type="binding site" evidence="1">
    <location>
        <position position="53"/>
    </location>
    <ligand>
        <name>S-adenosyl-L-methionine</name>
        <dbReference type="ChEBI" id="CHEBI:59789"/>
    </ligand>
</feature>
<feature type="binding site" evidence="1">
    <location>
        <position position="74"/>
    </location>
    <ligand>
        <name>S-adenosyl-L-methionine</name>
        <dbReference type="ChEBI" id="CHEBI:59789"/>
    </ligand>
</feature>
<feature type="binding site" evidence="1">
    <location>
        <position position="97"/>
    </location>
    <ligand>
        <name>S-adenosyl-L-methionine</name>
        <dbReference type="ChEBI" id="CHEBI:59789"/>
    </ligand>
</feature>
<proteinExistence type="inferred from homology"/>
<reference key="1">
    <citation type="journal article" date="2004" name="Nucleic Acids Res.">
        <title>Thermoadaptation trait revealed by the genome sequence of thermophilic Geobacillus kaustophilus.</title>
        <authorList>
            <person name="Takami H."/>
            <person name="Takaki Y."/>
            <person name="Chee G.-J."/>
            <person name="Nishi S."/>
            <person name="Shimamura S."/>
            <person name="Suzuki H."/>
            <person name="Matsui S."/>
            <person name="Uchiyama I."/>
        </authorList>
    </citation>
    <scope>NUCLEOTIDE SEQUENCE [LARGE SCALE GENOMIC DNA]</scope>
    <source>
        <strain>HTA426</strain>
    </source>
</reference>
<organism>
    <name type="scientific">Geobacillus kaustophilus (strain HTA426)</name>
    <dbReference type="NCBI Taxonomy" id="235909"/>
    <lineage>
        <taxon>Bacteria</taxon>
        <taxon>Bacillati</taxon>
        <taxon>Bacillota</taxon>
        <taxon>Bacilli</taxon>
        <taxon>Bacillales</taxon>
        <taxon>Anoxybacillaceae</taxon>
        <taxon>Geobacillus</taxon>
        <taxon>Geobacillus thermoleovorans group</taxon>
    </lineage>
</organism>
<accession>Q5KWV8</accession>
<sequence length="215" mass="24191">MGREFLDLFEQWAESYDRSVEGYDEQYRDVFAGYDRILSTVADKAGQVVLEFGVGTGNLTKKLLERGKQVYGIEPSAPMRKKAAEKLSGRAVILDGDFLQFPTPPEPIDTIASTYAFHHLTDAEKDEALAKYSQLLHPGGKIVFADTAFRDKEAFRQAIEEARARGFHDLADDLEREYYTTLDVLASLFSKHGFSASFAQQNAFVWVMEAVKQTT</sequence>
<evidence type="ECO:0000255" key="1">
    <source>
        <dbReference type="HAMAP-Rule" id="MF_02100"/>
    </source>
</evidence>
<keyword id="KW-0489">Methyltransferase</keyword>
<keyword id="KW-1185">Reference proteome</keyword>
<keyword id="KW-0949">S-adenosyl-L-methionine</keyword>
<keyword id="KW-0808">Transferase</keyword>
<protein>
    <recommendedName>
        <fullName evidence="1">Uncharacterized methyltransferase GK2543</fullName>
        <ecNumber evidence="1">2.1.1.-</ecNumber>
    </recommendedName>
</protein>
<comment type="function">
    <text evidence="1">Could be a S-adenosyl-L-methionine-dependent methyltransferase.</text>
</comment>
<comment type="similarity">
    <text evidence="1">Belongs to the methyltransferase superfamily. YrrT family.</text>
</comment>